<gene>
    <name evidence="1" type="primary">tsf</name>
    <name type="ordered locus">ECS88_0180</name>
</gene>
<comment type="function">
    <text evidence="1">Associates with the EF-Tu.GDP complex and induces the exchange of GDP to GTP. It remains bound to the aminoacyl-tRNA.EF-Tu.GTP complex up to the GTP hydrolysis stage on the ribosome.</text>
</comment>
<comment type="subcellular location">
    <subcellularLocation>
        <location evidence="1">Cytoplasm</location>
    </subcellularLocation>
</comment>
<comment type="similarity">
    <text evidence="1">Belongs to the EF-Ts family.</text>
</comment>
<dbReference type="EMBL" id="CU928161">
    <property type="protein sequence ID" value="CAR01545.1"/>
    <property type="molecule type" value="Genomic_DNA"/>
</dbReference>
<dbReference type="RefSeq" id="WP_000818114.1">
    <property type="nucleotide sequence ID" value="NC_011742.1"/>
</dbReference>
<dbReference type="SMR" id="B7MBF1"/>
<dbReference type="GeneID" id="93777255"/>
<dbReference type="KEGG" id="ecz:ECS88_0180"/>
<dbReference type="HOGENOM" id="CLU_047155_0_2_6"/>
<dbReference type="Proteomes" id="UP000000747">
    <property type="component" value="Chromosome"/>
</dbReference>
<dbReference type="GO" id="GO:0005737">
    <property type="term" value="C:cytoplasm"/>
    <property type="evidence" value="ECO:0007669"/>
    <property type="project" value="UniProtKB-SubCell"/>
</dbReference>
<dbReference type="GO" id="GO:0003746">
    <property type="term" value="F:translation elongation factor activity"/>
    <property type="evidence" value="ECO:0007669"/>
    <property type="project" value="UniProtKB-UniRule"/>
</dbReference>
<dbReference type="CDD" id="cd14275">
    <property type="entry name" value="UBA_EF-Ts"/>
    <property type="match status" value="1"/>
</dbReference>
<dbReference type="FunFam" id="1.10.286.20:FF:000001">
    <property type="entry name" value="Elongation factor Ts"/>
    <property type="match status" value="1"/>
</dbReference>
<dbReference type="FunFam" id="1.10.8.10:FF:000001">
    <property type="entry name" value="Elongation factor Ts"/>
    <property type="match status" value="1"/>
</dbReference>
<dbReference type="FunFam" id="3.30.479.20:FF:000001">
    <property type="entry name" value="Elongation factor Ts"/>
    <property type="match status" value="1"/>
</dbReference>
<dbReference type="Gene3D" id="1.10.286.20">
    <property type="match status" value="1"/>
</dbReference>
<dbReference type="Gene3D" id="1.10.8.10">
    <property type="entry name" value="DNA helicase RuvA subunit, C-terminal domain"/>
    <property type="match status" value="1"/>
</dbReference>
<dbReference type="Gene3D" id="3.30.479.20">
    <property type="entry name" value="Elongation factor Ts, dimerisation domain"/>
    <property type="match status" value="2"/>
</dbReference>
<dbReference type="HAMAP" id="MF_00050">
    <property type="entry name" value="EF_Ts"/>
    <property type="match status" value="1"/>
</dbReference>
<dbReference type="InterPro" id="IPR036402">
    <property type="entry name" value="EF-Ts_dimer_sf"/>
</dbReference>
<dbReference type="InterPro" id="IPR001816">
    <property type="entry name" value="Transl_elong_EFTs/EF1B"/>
</dbReference>
<dbReference type="InterPro" id="IPR014039">
    <property type="entry name" value="Transl_elong_EFTs/EF1B_dimer"/>
</dbReference>
<dbReference type="InterPro" id="IPR018101">
    <property type="entry name" value="Transl_elong_Ts_CS"/>
</dbReference>
<dbReference type="InterPro" id="IPR009060">
    <property type="entry name" value="UBA-like_sf"/>
</dbReference>
<dbReference type="NCBIfam" id="TIGR00116">
    <property type="entry name" value="tsf"/>
    <property type="match status" value="1"/>
</dbReference>
<dbReference type="PANTHER" id="PTHR11741">
    <property type="entry name" value="ELONGATION FACTOR TS"/>
    <property type="match status" value="1"/>
</dbReference>
<dbReference type="PANTHER" id="PTHR11741:SF0">
    <property type="entry name" value="ELONGATION FACTOR TS, MITOCHONDRIAL"/>
    <property type="match status" value="1"/>
</dbReference>
<dbReference type="Pfam" id="PF00889">
    <property type="entry name" value="EF_TS"/>
    <property type="match status" value="1"/>
</dbReference>
<dbReference type="SUPFAM" id="SSF54713">
    <property type="entry name" value="Elongation factor Ts (EF-Ts), dimerisation domain"/>
    <property type="match status" value="2"/>
</dbReference>
<dbReference type="SUPFAM" id="SSF46934">
    <property type="entry name" value="UBA-like"/>
    <property type="match status" value="1"/>
</dbReference>
<dbReference type="PROSITE" id="PS01126">
    <property type="entry name" value="EF_TS_1"/>
    <property type="match status" value="1"/>
</dbReference>
<dbReference type="PROSITE" id="PS01127">
    <property type="entry name" value="EF_TS_2"/>
    <property type="match status" value="1"/>
</dbReference>
<sequence length="283" mass="30423">MAEITASLVKELRERTGAGMMDCKKALTEANGDIELAIENMRKSGAIKAAKKAGNVAADGVIKTKIDGNYGIILEVNCQTDFVAKDAGFQAFADKVLDAAVAGKITDVEVLKAQFEEERVALVAKIGENINIRRVAALEGDVLGSYQHGARIGVLVAAKGADEELVKHIAMHVAASKPEFIKPEDVSAEVVEKEYQVQLDIAMQSGKPKEIAEKMVEGRMKKFTGEVSLTGQPFVMEPSKTVGQLLKEHNAEVTGFIRFEVGEGIEKVETDFAAEVAAMSKQS</sequence>
<organism>
    <name type="scientific">Escherichia coli O45:K1 (strain S88 / ExPEC)</name>
    <dbReference type="NCBI Taxonomy" id="585035"/>
    <lineage>
        <taxon>Bacteria</taxon>
        <taxon>Pseudomonadati</taxon>
        <taxon>Pseudomonadota</taxon>
        <taxon>Gammaproteobacteria</taxon>
        <taxon>Enterobacterales</taxon>
        <taxon>Enterobacteriaceae</taxon>
        <taxon>Escherichia</taxon>
    </lineage>
</organism>
<name>EFTS_ECO45</name>
<evidence type="ECO:0000255" key="1">
    <source>
        <dbReference type="HAMAP-Rule" id="MF_00050"/>
    </source>
</evidence>
<accession>B7MBF1</accession>
<keyword id="KW-0963">Cytoplasm</keyword>
<keyword id="KW-0251">Elongation factor</keyword>
<keyword id="KW-0648">Protein biosynthesis</keyword>
<keyword id="KW-1185">Reference proteome</keyword>
<protein>
    <recommendedName>
        <fullName evidence="1">Elongation factor Ts</fullName>
        <shortName evidence="1">EF-Ts</shortName>
    </recommendedName>
</protein>
<proteinExistence type="inferred from homology"/>
<reference key="1">
    <citation type="journal article" date="2009" name="PLoS Genet.">
        <title>Organised genome dynamics in the Escherichia coli species results in highly diverse adaptive paths.</title>
        <authorList>
            <person name="Touchon M."/>
            <person name="Hoede C."/>
            <person name="Tenaillon O."/>
            <person name="Barbe V."/>
            <person name="Baeriswyl S."/>
            <person name="Bidet P."/>
            <person name="Bingen E."/>
            <person name="Bonacorsi S."/>
            <person name="Bouchier C."/>
            <person name="Bouvet O."/>
            <person name="Calteau A."/>
            <person name="Chiapello H."/>
            <person name="Clermont O."/>
            <person name="Cruveiller S."/>
            <person name="Danchin A."/>
            <person name="Diard M."/>
            <person name="Dossat C."/>
            <person name="Karoui M.E."/>
            <person name="Frapy E."/>
            <person name="Garry L."/>
            <person name="Ghigo J.M."/>
            <person name="Gilles A.M."/>
            <person name="Johnson J."/>
            <person name="Le Bouguenec C."/>
            <person name="Lescat M."/>
            <person name="Mangenot S."/>
            <person name="Martinez-Jehanne V."/>
            <person name="Matic I."/>
            <person name="Nassif X."/>
            <person name="Oztas S."/>
            <person name="Petit M.A."/>
            <person name="Pichon C."/>
            <person name="Rouy Z."/>
            <person name="Ruf C.S."/>
            <person name="Schneider D."/>
            <person name="Tourret J."/>
            <person name="Vacherie B."/>
            <person name="Vallenet D."/>
            <person name="Medigue C."/>
            <person name="Rocha E.P.C."/>
            <person name="Denamur E."/>
        </authorList>
    </citation>
    <scope>NUCLEOTIDE SEQUENCE [LARGE SCALE GENOMIC DNA]</scope>
    <source>
        <strain>S88 / ExPEC</strain>
    </source>
</reference>
<feature type="chain" id="PRO_1000116728" description="Elongation factor Ts">
    <location>
        <begin position="1"/>
        <end position="283"/>
    </location>
</feature>
<feature type="region of interest" description="Involved in Mg(2+) ion dislocation from EF-Tu" evidence="1">
    <location>
        <begin position="80"/>
        <end position="83"/>
    </location>
</feature>